<proteinExistence type="evidence at protein level"/>
<organism>
    <name type="scientific">Mus musculus</name>
    <name type="common">Mouse</name>
    <dbReference type="NCBI Taxonomy" id="10090"/>
    <lineage>
        <taxon>Eukaryota</taxon>
        <taxon>Metazoa</taxon>
        <taxon>Chordata</taxon>
        <taxon>Craniata</taxon>
        <taxon>Vertebrata</taxon>
        <taxon>Euteleostomi</taxon>
        <taxon>Mammalia</taxon>
        <taxon>Eutheria</taxon>
        <taxon>Euarchontoglires</taxon>
        <taxon>Glires</taxon>
        <taxon>Rodentia</taxon>
        <taxon>Myomorpha</taxon>
        <taxon>Muroidea</taxon>
        <taxon>Muridae</taxon>
        <taxon>Murinae</taxon>
        <taxon>Mus</taxon>
        <taxon>Mus</taxon>
    </lineage>
</organism>
<comment type="function">
    <text evidence="2">The RIC1-RGP1 complex acts as a guanine nucleotide exchange factor (GEF), which activates RAB6A by exchanging bound GDP for free GTP, and may thereby be required for efficient fusion of endosome-derived vesicles with the Golgi compartment. The RIC1-RGP1 complex participates in the recycling of mannose-6-phosphate receptors. Required for phosphorylation and localization of GJA1. Is a regulator of procollagen transport and secretion, and is required for correct cartilage morphogenesis and development of the craniofacial skeleton.</text>
</comment>
<comment type="subunit">
    <text evidence="2">Forms a complex with RGP1; the interaction enhances RAB6A GTPase activity. Interacts (via central domain) with RGP1. Interacts with RAB6A; the interaction is direct with a preference for RAB6A-GDP. Interacts (via C-terminus domain) with RAB33B; the interaction is direct with a preference for RAB33B-GTP. Interacts with GJA1.</text>
</comment>
<comment type="subcellular location">
    <subcellularLocation>
        <location evidence="2">Cytoplasm</location>
        <location evidence="2">Cytosol</location>
    </subcellularLocation>
    <subcellularLocation>
        <location evidence="2">Membrane</location>
    </subcellularLocation>
</comment>
<comment type="alternative products">
    <event type="alternative splicing"/>
    <isoform>
        <id>Q69ZJ7-1</id>
        <name>1</name>
        <sequence type="displayed"/>
    </isoform>
    <isoform>
        <id>Q69ZJ7-2</id>
        <name>2</name>
        <sequence type="described" ref="VSP_031710 VSP_031711"/>
    </isoform>
    <isoform>
        <id>Q69ZJ7-3</id>
        <name>3</name>
        <sequence type="described" ref="VSP_031708 VSP_031709"/>
    </isoform>
</comment>
<comment type="tissue specificity">
    <text evidence="4">Expressed in the eye lens.</text>
</comment>
<comment type="similarity">
    <text evidence="7">Belongs to the RIC1 family.</text>
</comment>
<accession>Q69ZJ7</accession>
<accession>A4GZ02</accession>
<accession>Q3U0Q6</accession>
<accession>Q3UWK1</accession>
<name>RIC1_MOUSE</name>
<feature type="chain" id="PRO_0000320663" description="Guanine nucleotide exchange factor subunit RIC1">
    <location>
        <begin position="1"/>
        <end position="1422"/>
    </location>
</feature>
<feature type="repeat" description="WD 1">
    <location>
        <begin position="64"/>
        <end position="103"/>
    </location>
</feature>
<feature type="repeat" description="WD 2">
    <location>
        <begin position="304"/>
        <end position="343"/>
    </location>
</feature>
<feature type="region of interest" description="Disordered" evidence="3">
    <location>
        <begin position="442"/>
        <end position="462"/>
    </location>
</feature>
<feature type="region of interest" description="Disordered" evidence="3">
    <location>
        <begin position="986"/>
        <end position="1005"/>
    </location>
</feature>
<feature type="region of interest" description="Disordered" evidence="3">
    <location>
        <begin position="1021"/>
        <end position="1048"/>
    </location>
</feature>
<feature type="region of interest" description="Disordered" evidence="3">
    <location>
        <begin position="1179"/>
        <end position="1198"/>
    </location>
</feature>
<feature type="region of interest" description="Disordered" evidence="3">
    <location>
        <begin position="1355"/>
        <end position="1422"/>
    </location>
</feature>
<feature type="compositionally biased region" description="Basic and acidic residues" evidence="3">
    <location>
        <begin position="449"/>
        <end position="460"/>
    </location>
</feature>
<feature type="compositionally biased region" description="Polar residues" evidence="3">
    <location>
        <begin position="1378"/>
        <end position="1396"/>
    </location>
</feature>
<feature type="compositionally biased region" description="Acidic residues" evidence="3">
    <location>
        <begin position="1403"/>
        <end position="1412"/>
    </location>
</feature>
<feature type="modified residue" description="Phosphothreonine" evidence="9">
    <location>
        <position position="991"/>
    </location>
</feature>
<feature type="modified residue" description="Phosphothreonine" evidence="9">
    <location>
        <position position="995"/>
    </location>
</feature>
<feature type="modified residue" description="Phosphoserine" evidence="2">
    <location>
        <position position="1014"/>
    </location>
</feature>
<feature type="modified residue" description="Phosphoserine" evidence="2">
    <location>
        <position position="1016"/>
    </location>
</feature>
<feature type="modified residue" description="Phosphoserine" evidence="2">
    <location>
        <position position="1018"/>
    </location>
</feature>
<feature type="modified residue" description="Phosphoserine" evidence="2">
    <location>
        <position position="1036"/>
    </location>
</feature>
<feature type="modified residue" description="Phosphoserine" evidence="9">
    <location>
        <position position="1171"/>
    </location>
</feature>
<feature type="splice variant" id="VSP_031708" description="In isoform 3." evidence="5 6">
    <original>SLQSVLEDLLV</original>
    <variation>RYGMLVKFEIF</variation>
    <location>
        <begin position="147"/>
        <end position="157"/>
    </location>
</feature>
<feature type="splice variant" id="VSP_031709" description="In isoform 3." evidence="5 6">
    <location>
        <begin position="158"/>
        <end position="1422"/>
    </location>
</feature>
<feature type="splice variant" id="VSP_031710" description="In isoform 2." evidence="6">
    <original>ISSTYLESNWPIRFSAIDKLGQNIAVAGKFGFAHYSLLTKKWKLFGNITQEQNMIVT</original>
    <variation>VSVHLLTAADSLIRNGSLGRFLIIFIAISLSMLWFLSLPFFFPFDRVYSKSYFFFPQ</variation>
    <location>
        <begin position="485"/>
        <end position="541"/>
    </location>
</feature>
<feature type="splice variant" id="VSP_031711" description="In isoform 2." evidence="6">
    <location>
        <begin position="542"/>
        <end position="1422"/>
    </location>
</feature>
<protein>
    <recommendedName>
        <fullName evidence="7">Guanine nucleotide exchange factor subunit RIC1</fullName>
    </recommendedName>
    <alternativeName>
        <fullName evidence="1">Protein RIC1 homolog</fullName>
    </alternativeName>
    <alternativeName>
        <fullName evidence="8">RAB6A-GEF complex partner protein 1</fullName>
    </alternativeName>
</protein>
<keyword id="KW-0025">Alternative splicing</keyword>
<keyword id="KW-0963">Cytoplasm</keyword>
<keyword id="KW-0344">Guanine-nucleotide releasing factor</keyword>
<keyword id="KW-0472">Membrane</keyword>
<keyword id="KW-0597">Phosphoprotein</keyword>
<keyword id="KW-1185">Reference proteome</keyword>
<keyword id="KW-0677">Repeat</keyword>
<keyword id="KW-0853">WD repeat</keyword>
<reference key="1">
    <citation type="journal article" date="2005" name="Science">
        <title>The transcriptional landscape of the mammalian genome.</title>
        <authorList>
            <person name="Carninci P."/>
            <person name="Kasukawa T."/>
            <person name="Katayama S."/>
            <person name="Gough J."/>
            <person name="Frith M.C."/>
            <person name="Maeda N."/>
            <person name="Oyama R."/>
            <person name="Ravasi T."/>
            <person name="Lenhard B."/>
            <person name="Wells C."/>
            <person name="Kodzius R."/>
            <person name="Shimokawa K."/>
            <person name="Bajic V.B."/>
            <person name="Brenner S.E."/>
            <person name="Batalov S."/>
            <person name="Forrest A.R."/>
            <person name="Zavolan M."/>
            <person name="Davis M.J."/>
            <person name="Wilming L.G."/>
            <person name="Aidinis V."/>
            <person name="Allen J.E."/>
            <person name="Ambesi-Impiombato A."/>
            <person name="Apweiler R."/>
            <person name="Aturaliya R.N."/>
            <person name="Bailey T.L."/>
            <person name="Bansal M."/>
            <person name="Baxter L."/>
            <person name="Beisel K.W."/>
            <person name="Bersano T."/>
            <person name="Bono H."/>
            <person name="Chalk A.M."/>
            <person name="Chiu K.P."/>
            <person name="Choudhary V."/>
            <person name="Christoffels A."/>
            <person name="Clutterbuck D.R."/>
            <person name="Crowe M.L."/>
            <person name="Dalla E."/>
            <person name="Dalrymple B.P."/>
            <person name="de Bono B."/>
            <person name="Della Gatta G."/>
            <person name="di Bernardo D."/>
            <person name="Down T."/>
            <person name="Engstrom P."/>
            <person name="Fagiolini M."/>
            <person name="Faulkner G."/>
            <person name="Fletcher C.F."/>
            <person name="Fukushima T."/>
            <person name="Furuno M."/>
            <person name="Futaki S."/>
            <person name="Gariboldi M."/>
            <person name="Georgii-Hemming P."/>
            <person name="Gingeras T.R."/>
            <person name="Gojobori T."/>
            <person name="Green R.E."/>
            <person name="Gustincich S."/>
            <person name="Harbers M."/>
            <person name="Hayashi Y."/>
            <person name="Hensch T.K."/>
            <person name="Hirokawa N."/>
            <person name="Hill D."/>
            <person name="Huminiecki L."/>
            <person name="Iacono M."/>
            <person name="Ikeo K."/>
            <person name="Iwama A."/>
            <person name="Ishikawa T."/>
            <person name="Jakt M."/>
            <person name="Kanapin A."/>
            <person name="Katoh M."/>
            <person name="Kawasawa Y."/>
            <person name="Kelso J."/>
            <person name="Kitamura H."/>
            <person name="Kitano H."/>
            <person name="Kollias G."/>
            <person name="Krishnan S.P."/>
            <person name="Kruger A."/>
            <person name="Kummerfeld S.K."/>
            <person name="Kurochkin I.V."/>
            <person name="Lareau L.F."/>
            <person name="Lazarevic D."/>
            <person name="Lipovich L."/>
            <person name="Liu J."/>
            <person name="Liuni S."/>
            <person name="McWilliam S."/>
            <person name="Madan Babu M."/>
            <person name="Madera M."/>
            <person name="Marchionni L."/>
            <person name="Matsuda H."/>
            <person name="Matsuzawa S."/>
            <person name="Miki H."/>
            <person name="Mignone F."/>
            <person name="Miyake S."/>
            <person name="Morris K."/>
            <person name="Mottagui-Tabar S."/>
            <person name="Mulder N."/>
            <person name="Nakano N."/>
            <person name="Nakauchi H."/>
            <person name="Ng P."/>
            <person name="Nilsson R."/>
            <person name="Nishiguchi S."/>
            <person name="Nishikawa S."/>
            <person name="Nori F."/>
            <person name="Ohara O."/>
            <person name="Okazaki Y."/>
            <person name="Orlando V."/>
            <person name="Pang K.C."/>
            <person name="Pavan W.J."/>
            <person name="Pavesi G."/>
            <person name="Pesole G."/>
            <person name="Petrovsky N."/>
            <person name="Piazza S."/>
            <person name="Reed J."/>
            <person name="Reid J.F."/>
            <person name="Ring B.Z."/>
            <person name="Ringwald M."/>
            <person name="Rost B."/>
            <person name="Ruan Y."/>
            <person name="Salzberg S.L."/>
            <person name="Sandelin A."/>
            <person name="Schneider C."/>
            <person name="Schoenbach C."/>
            <person name="Sekiguchi K."/>
            <person name="Semple C.A."/>
            <person name="Seno S."/>
            <person name="Sessa L."/>
            <person name="Sheng Y."/>
            <person name="Shibata Y."/>
            <person name="Shimada H."/>
            <person name="Shimada K."/>
            <person name="Silva D."/>
            <person name="Sinclair B."/>
            <person name="Sperling S."/>
            <person name="Stupka E."/>
            <person name="Sugiura K."/>
            <person name="Sultana R."/>
            <person name="Takenaka Y."/>
            <person name="Taki K."/>
            <person name="Tammoja K."/>
            <person name="Tan S.L."/>
            <person name="Tang S."/>
            <person name="Taylor M.S."/>
            <person name="Tegner J."/>
            <person name="Teichmann S.A."/>
            <person name="Ueda H.R."/>
            <person name="van Nimwegen E."/>
            <person name="Verardo R."/>
            <person name="Wei C.L."/>
            <person name="Yagi K."/>
            <person name="Yamanishi H."/>
            <person name="Zabarovsky E."/>
            <person name="Zhu S."/>
            <person name="Zimmer A."/>
            <person name="Hide W."/>
            <person name="Bult C."/>
            <person name="Grimmond S.M."/>
            <person name="Teasdale R.D."/>
            <person name="Liu E.T."/>
            <person name="Brusic V."/>
            <person name="Quackenbush J."/>
            <person name="Wahlestedt C."/>
            <person name="Mattick J.S."/>
            <person name="Hume D.A."/>
            <person name="Kai C."/>
            <person name="Sasaki D."/>
            <person name="Tomaru Y."/>
            <person name="Fukuda S."/>
            <person name="Kanamori-Katayama M."/>
            <person name="Suzuki M."/>
            <person name="Aoki J."/>
            <person name="Arakawa T."/>
            <person name="Iida J."/>
            <person name="Imamura K."/>
            <person name="Itoh M."/>
            <person name="Kato T."/>
            <person name="Kawaji H."/>
            <person name="Kawagashira N."/>
            <person name="Kawashima T."/>
            <person name="Kojima M."/>
            <person name="Kondo S."/>
            <person name="Konno H."/>
            <person name="Nakano K."/>
            <person name="Ninomiya N."/>
            <person name="Nishio T."/>
            <person name="Okada M."/>
            <person name="Plessy C."/>
            <person name="Shibata K."/>
            <person name="Shiraki T."/>
            <person name="Suzuki S."/>
            <person name="Tagami M."/>
            <person name="Waki K."/>
            <person name="Watahiki A."/>
            <person name="Okamura-Oho Y."/>
            <person name="Suzuki H."/>
            <person name="Kawai J."/>
            <person name="Hayashizaki Y."/>
        </authorList>
    </citation>
    <scope>NUCLEOTIDE SEQUENCE [LARGE SCALE MRNA] (ISOFORMS 2 AND 3)</scope>
    <scope>NUCLEOTIDE SEQUENCE [LARGE SCALE MRNA] OF 980-1422 (ISOFORM 1)</scope>
    <source>
        <strain>C57BL/6J</strain>
        <strain>NOD</strain>
        <tissue>Eye</tissue>
        <tissue>Spleen</tissue>
    </source>
</reference>
<reference key="2">
    <citation type="journal article" date="2004" name="Genome Res.">
        <title>The status, quality, and expansion of the NIH full-length cDNA project: the Mammalian Gene Collection (MGC).</title>
        <authorList>
            <consortium name="The MGC Project Team"/>
        </authorList>
    </citation>
    <scope>NUCLEOTIDE SEQUENCE [LARGE SCALE MRNA] (ISOFORM 3)</scope>
    <source>
        <tissue>Brain</tissue>
    </source>
</reference>
<reference key="3">
    <citation type="journal article" date="2004" name="DNA Res.">
        <title>Prediction of the coding sequences of mouse homologues of KIAA gene: IV. The complete nucleotide sequences of 500 mouse KIAA-homologous cDNAs identified by screening of terminal sequences of cDNA clones randomly sampled from size-fractionated libraries.</title>
        <authorList>
            <person name="Okazaki N."/>
            <person name="Kikuno R."/>
            <person name="Ohara R."/>
            <person name="Inamoto S."/>
            <person name="Koseki H."/>
            <person name="Hiraoka S."/>
            <person name="Saga Y."/>
            <person name="Seino S."/>
            <person name="Nishimura M."/>
            <person name="Kaisho T."/>
            <person name="Hoshino K."/>
            <person name="Kitamura H."/>
            <person name="Nagase T."/>
            <person name="Ohara O."/>
            <person name="Koga H."/>
        </authorList>
    </citation>
    <scope>NUCLEOTIDE SEQUENCE [LARGE SCALE MRNA] OF 60-1422</scope>
</reference>
<reference key="4">
    <citation type="journal article" date="2010" name="Cell">
        <title>A tissue-specific atlas of mouse protein phosphorylation and expression.</title>
        <authorList>
            <person name="Huttlin E.L."/>
            <person name="Jedrychowski M.P."/>
            <person name="Elias J.E."/>
            <person name="Goswami T."/>
            <person name="Rad R."/>
            <person name="Beausoleil S.A."/>
            <person name="Villen J."/>
            <person name="Haas W."/>
            <person name="Sowa M.E."/>
            <person name="Gygi S.P."/>
        </authorList>
    </citation>
    <scope>PHOSPHORYLATION [LARGE SCALE ANALYSIS] AT THR-991; THR-995 AND SER-1171</scope>
    <scope>IDENTIFICATION BY MASS SPECTROMETRY [LARGE SCALE ANALYSIS]</scope>
    <source>
        <tissue>Brown adipose tissue</tissue>
        <tissue>Heart</tissue>
        <tissue>Kidney</tissue>
        <tissue>Liver</tissue>
        <tissue>Lung</tissue>
        <tissue>Pancreas</tissue>
        <tissue>Spleen</tissue>
        <tissue>Testis</tissue>
    </source>
</reference>
<reference key="5">
    <citation type="journal article" date="2017" name="Hum. Genet.">
        <title>Novel phenotypes and loci identified through clinical genomics approaches to pediatric cataract.</title>
        <authorList>
            <person name="Patel N."/>
            <person name="Anand D."/>
            <person name="Monies D."/>
            <person name="Maddirevula S."/>
            <person name="Khan A.O."/>
            <person name="Algoufi T."/>
            <person name="Alowain M."/>
            <person name="Faqeih E."/>
            <person name="Alshammari M."/>
            <person name="Qudair A."/>
            <person name="Alsharif H."/>
            <person name="Aljubran F."/>
            <person name="Alsaif H.S."/>
            <person name="Ibrahim N."/>
            <person name="Abdulwahab F.M."/>
            <person name="Hashem M."/>
            <person name="Alsedairy H."/>
            <person name="Aldahmesh M.A."/>
            <person name="Lachke S.A."/>
            <person name="Alkuraya F.S."/>
        </authorList>
    </citation>
    <scope>TISSUE SPECIFICITY</scope>
</reference>
<sequence length="1422" mass="158829">MYFLSGWPKRLLCAPRSPAEAPLHVQSDPRRAFFAVLAPARLSIWYSRPSVLIVTYKEPAKSSTQFGSYKQAEWRPDSTMIAVSTANGYILFFHITSSRGDKYLYEPVYPKGSPQMKGIPHFKEEHCAPALNLEMKKILDLQAPIMSLQSVLEDLLVATSDGLLHLIHWEGMTNGRKAINLSTVPFSVDLQSSRVGSFLGFADVHIKDMEYCATLDGFAVVFNDGKVGFITPVSSRFTAEQLHGVWPQDVIDGTCVAVNNKYRLMAFGCASGCVQVYTIDNTTGAMLLSHKLELTAKQYPDIWNKTGAVKLIRWSPDNSAVIVTWEYGGLSLWSVFGAQLICTLGGDFAYRSDGTKKDPLKINSMSWGAEGYHLWVISGLGSQHTQIETDLRSTVKEPSILLFQFIKSVLTVNPCMSNQEQVLLQGEDRLYLNCGEASQAQNPKYSSARAERMPRHEKSPFADGGLEAPGLSTLLGHRHWHVVQISSTYLESNWPIRFSAIDKLGQNIAVAGKFGFAHYSLLTKKWKLFGNITQEQNMIVTGGLAWWDDFMVLACYNLSDCQEELRIYLRTSNLDNAFAHVTKAPMETLLLSVFRDMVVVFRADCSICLYSIERKSDGSNTTASVQVLQEVSMSRYIPHPFLVVSVTLTSVSTENGISLKMPQQARDAESIMLNLAGQLIMMQRDRSGPQIREKDSHPNQRKLLPFCPPVVLAQSVENVWTTCRANKQKRHLLEALWLSCGGAGMKVWLPLFPRDHRKPHSFLSQRIMLPFHINIYPLAVLFEDALVLGAVNDTLLYDSLYTRSSAREQLEVLFPFCVVERTSQIYLHHILRQLLVRNLGEQALLLAQSCAALPYFPHVLELMLHEVLEEEATSREPIPDPLLPTVAKFITEFPLFLQTVVHCARKTEYALWNYLFAAVGNPKDLFEECLMAQDLDTAASYLIILQNMEVPAVSRQHATLLFNTALEQGKWDLCRHMIRFLKAIGSGESETPPSTPTSQEPSSSGGFEFFRNRSISLSQSAENVPPGKFGLQKTLSMPTGPSGKRWSKDSECAENMYIDMMLWRHARRLLEEVRLKDLGCFAAQLGFELISWLCKERTRAARVDNFVVALKRLHKDFLWPLPIIPASSISSPFKNGKCRAVGEQMLKSQSADPFITPEMDAGISNIQRSQSWLSNIGPTHRDTDRASSPGPQMQDAFLSPLSNKGDECSIGSATDLTESSSVVDGDWTMVDENFSTLSLTQSELEHISMELASKGPHKSQVQLRYLLHIFMEAGCLDWCVVIGLILRESSVVSQLLGIAQSSEMDGEMLQNIKSGLQAVDRWASTDCPGYKPFLNIIKPQLQKLSEITEELVQPDTFQPVTVGKTPEQTSPRAEENRGSCSHGSISQSEPGSNNVVSRKEEDTTQADEEEPLQDGAYDCSVS</sequence>
<dbReference type="EMBL" id="AK136285">
    <property type="protein sequence ID" value="BAE22914.1"/>
    <property type="molecule type" value="mRNA"/>
</dbReference>
<dbReference type="EMBL" id="AK156653">
    <property type="protein sequence ID" value="BAE33795.1"/>
    <property type="molecule type" value="mRNA"/>
</dbReference>
<dbReference type="EMBL" id="AK048394">
    <property type="protein sequence ID" value="BAC33322.1"/>
    <property type="molecule type" value="mRNA"/>
</dbReference>
<dbReference type="EMBL" id="BC132346">
    <property type="protein sequence ID" value="AAI32347.2"/>
    <property type="molecule type" value="mRNA"/>
</dbReference>
<dbReference type="EMBL" id="AK173171">
    <property type="protein sequence ID" value="BAD32449.1"/>
    <property type="molecule type" value="mRNA"/>
</dbReference>
<dbReference type="CCDS" id="CCDS37951.1">
    <molecule id="Q69ZJ7-1"/>
</dbReference>
<dbReference type="FunCoup" id="Q69ZJ7">
    <property type="interactions" value="3152"/>
</dbReference>
<dbReference type="IntAct" id="Q69ZJ7">
    <property type="interactions" value="1"/>
</dbReference>
<dbReference type="STRING" id="10090.ENSMUSP00000043437"/>
<dbReference type="GlyGen" id="Q69ZJ7">
    <property type="glycosylation" value="1 site"/>
</dbReference>
<dbReference type="iPTMnet" id="Q69ZJ7"/>
<dbReference type="PhosphoSitePlus" id="Q69ZJ7"/>
<dbReference type="jPOST" id="Q69ZJ7"/>
<dbReference type="PaxDb" id="10090-ENSMUSP00000043437"/>
<dbReference type="PeptideAtlas" id="Q69ZJ7"/>
<dbReference type="ProteomicsDB" id="253126">
    <molecule id="Q69ZJ7-1"/>
</dbReference>
<dbReference type="ProteomicsDB" id="253127">
    <molecule id="Q69ZJ7-2"/>
</dbReference>
<dbReference type="ProteomicsDB" id="253128">
    <molecule id="Q69ZJ7-3"/>
</dbReference>
<dbReference type="Pumba" id="Q69ZJ7"/>
<dbReference type="UCSC" id="uc008hdq.1">
    <molecule id="Q69ZJ7-3"/>
    <property type="organism name" value="mouse"/>
</dbReference>
<dbReference type="UCSC" id="uc008hdr.1">
    <molecule id="Q69ZJ7-2"/>
    <property type="organism name" value="mouse"/>
</dbReference>
<dbReference type="AGR" id="MGI:1924893"/>
<dbReference type="MGI" id="MGI:1924893">
    <property type="gene designation" value="Ric1"/>
</dbReference>
<dbReference type="eggNOG" id="KOG2006">
    <property type="taxonomic scope" value="Eukaryota"/>
</dbReference>
<dbReference type="HOGENOM" id="CLU_1677280_0_0_1"/>
<dbReference type="InParanoid" id="Q69ZJ7"/>
<dbReference type="PhylomeDB" id="Q69ZJ7"/>
<dbReference type="Reactome" id="R-MMU-6811438">
    <property type="pathway name" value="Intra-Golgi traffic"/>
</dbReference>
<dbReference type="Reactome" id="R-MMU-6811440">
    <property type="pathway name" value="Retrograde transport at the Trans-Golgi-Network"/>
</dbReference>
<dbReference type="Reactome" id="R-MMU-8876198">
    <property type="pathway name" value="RAB GEFs exchange GTP for GDP on RABs"/>
</dbReference>
<dbReference type="ChiTaRS" id="Ric1">
    <property type="organism name" value="mouse"/>
</dbReference>
<dbReference type="PRO" id="PR:Q69ZJ7"/>
<dbReference type="Proteomes" id="UP000000589">
    <property type="component" value="Unplaced"/>
</dbReference>
<dbReference type="RNAct" id="Q69ZJ7">
    <property type="molecule type" value="protein"/>
</dbReference>
<dbReference type="GO" id="GO:0005829">
    <property type="term" value="C:cytosol"/>
    <property type="evidence" value="ECO:0000250"/>
    <property type="project" value="UniProtKB"/>
</dbReference>
<dbReference type="GO" id="GO:0016020">
    <property type="term" value="C:membrane"/>
    <property type="evidence" value="ECO:0000250"/>
    <property type="project" value="UniProtKB"/>
</dbReference>
<dbReference type="GO" id="GO:0032991">
    <property type="term" value="C:protein-containing complex"/>
    <property type="evidence" value="ECO:0000250"/>
    <property type="project" value="UniProtKB"/>
</dbReference>
<dbReference type="GO" id="GO:0034066">
    <property type="term" value="C:Ric1-Rgp1 guanyl-nucleotide exchange factor complex"/>
    <property type="evidence" value="ECO:0000250"/>
    <property type="project" value="UniProtKB"/>
</dbReference>
<dbReference type="GO" id="GO:0005085">
    <property type="term" value="F:guanyl-nucleotide exchange factor activity"/>
    <property type="evidence" value="ECO:0000250"/>
    <property type="project" value="UniProtKB"/>
</dbReference>
<dbReference type="GO" id="GO:0031267">
    <property type="term" value="F:small GTPase binding"/>
    <property type="evidence" value="ECO:0000250"/>
    <property type="project" value="UniProtKB"/>
</dbReference>
<dbReference type="GO" id="GO:0006886">
    <property type="term" value="P:intracellular protein transport"/>
    <property type="evidence" value="ECO:0007669"/>
    <property type="project" value="InterPro"/>
</dbReference>
<dbReference type="GO" id="GO:0042177">
    <property type="term" value="P:negative regulation of protein catabolic process"/>
    <property type="evidence" value="ECO:0000250"/>
    <property type="project" value="UniProtKB"/>
</dbReference>
<dbReference type="GO" id="GO:0043547">
    <property type="term" value="P:positive regulation of GTPase activity"/>
    <property type="evidence" value="ECO:0000250"/>
    <property type="project" value="UniProtKB"/>
</dbReference>
<dbReference type="GO" id="GO:0042147">
    <property type="term" value="P:retrograde transport, endosome to Golgi"/>
    <property type="evidence" value="ECO:0000250"/>
    <property type="project" value="UniProtKB"/>
</dbReference>
<dbReference type="FunFam" id="2.130.10.10:FF:000288">
    <property type="entry name" value="RAB6A-GEF complex partner protein 1 isoform X3"/>
    <property type="match status" value="1"/>
</dbReference>
<dbReference type="Gene3D" id="2.130.10.10">
    <property type="entry name" value="YVTN repeat-like/Quinoprotein amine dehydrogenase"/>
    <property type="match status" value="1"/>
</dbReference>
<dbReference type="InterPro" id="IPR011044">
    <property type="entry name" value="Quino_amine_DH_bsu"/>
</dbReference>
<dbReference type="InterPro" id="IPR040096">
    <property type="entry name" value="Ric1"/>
</dbReference>
<dbReference type="InterPro" id="IPR009771">
    <property type="entry name" value="RIC1_C"/>
</dbReference>
<dbReference type="InterPro" id="IPR015943">
    <property type="entry name" value="WD40/YVTN_repeat-like_dom_sf"/>
</dbReference>
<dbReference type="PANTHER" id="PTHR22746:SF10">
    <property type="entry name" value="GUANINE NUCLEOTIDE EXCHANGE FACTOR SUBUNIT RIC1"/>
    <property type="match status" value="1"/>
</dbReference>
<dbReference type="PANTHER" id="PTHR22746">
    <property type="entry name" value="RAB6A-GEF COMPLEX PARTNER PROTEIN 1"/>
    <property type="match status" value="1"/>
</dbReference>
<dbReference type="Pfam" id="PF25440">
    <property type="entry name" value="Beta-prop_RIC1_2nd"/>
    <property type="match status" value="1"/>
</dbReference>
<dbReference type="Pfam" id="PF07064">
    <property type="entry name" value="RIC1"/>
    <property type="match status" value="1"/>
</dbReference>
<dbReference type="SUPFAM" id="SSF50969">
    <property type="entry name" value="YVTN repeat-like/Quinoprotein amine dehydrogenase"/>
    <property type="match status" value="1"/>
</dbReference>
<evidence type="ECO:0000250" key="1">
    <source>
        <dbReference type="UniProtKB" id="P40395"/>
    </source>
</evidence>
<evidence type="ECO:0000250" key="2">
    <source>
        <dbReference type="UniProtKB" id="Q4ADV7"/>
    </source>
</evidence>
<evidence type="ECO:0000256" key="3">
    <source>
        <dbReference type="SAM" id="MobiDB-lite"/>
    </source>
</evidence>
<evidence type="ECO:0000269" key="4">
    <source>
    </source>
</evidence>
<evidence type="ECO:0000303" key="5">
    <source>
    </source>
</evidence>
<evidence type="ECO:0000303" key="6">
    <source>
    </source>
</evidence>
<evidence type="ECO:0000305" key="7"/>
<evidence type="ECO:0000312" key="8">
    <source>
        <dbReference type="MGI" id="MGI:1924893"/>
    </source>
</evidence>
<evidence type="ECO:0007744" key="9">
    <source>
    </source>
</evidence>
<gene>
    <name evidence="8" type="primary">Ric1</name>
    <name type="synonym">Kiaa1432</name>
</gene>